<organism>
    <name type="scientific">Escherichia coli (strain K12)</name>
    <dbReference type="NCBI Taxonomy" id="83333"/>
    <lineage>
        <taxon>Bacteria</taxon>
        <taxon>Pseudomonadati</taxon>
        <taxon>Pseudomonadota</taxon>
        <taxon>Gammaproteobacteria</taxon>
        <taxon>Enterobacterales</taxon>
        <taxon>Enterobacteriaceae</taxon>
        <taxon>Escherichia</taxon>
    </lineage>
</organism>
<accession>P31125</accession>
<gene>
    <name type="primary">eamA</name>
    <name type="synonym">ydeD</name>
    <name type="ordered locus">b1533</name>
    <name type="ordered locus">JW5250</name>
</gene>
<sequence length="299" mass="32324">MSRKDGVLALLVVVVWGLNFVVIKVGLHNMPPLMLAGLRFMLVAFPAIFFVARPKVPLNLLLGYGLTISFAQFAFLFCAINFGMPAGLASLVLQAQAFFTIMLGAFTFGERLHGKQLAGIALAIFGVLVLIEDSLNGQHVAMLGFMLTLAAAFSWACGNIFNKKIMSHSTRPAVMSLVIWSALIPIIPFFVASLILDGSATMIHSLVTIDMTTILSLMYLAFVATIVGYGIWGTLLGRYETWRVAPLSLLVPVVGLASAALLLDERLTGLQFLGAVLIMTGLYINVFGLRWRKAVKVGS</sequence>
<reference key="1">
    <citation type="journal article" date="1993" name="J. Bacteriol.">
        <title>Genetic and functional analysis of the multiple antibiotic resistance (mar) locus in Escherichia coli.</title>
        <authorList>
            <person name="Cohen S.P."/>
            <person name="Haechler H."/>
            <person name="Levy S.B."/>
        </authorList>
    </citation>
    <scope>NUCLEOTIDE SEQUENCE [GENOMIC DNA]</scope>
</reference>
<reference key="2">
    <citation type="journal article" date="1996" name="DNA Res.">
        <title>A 570-kb DNA sequence of the Escherichia coli K-12 genome corresponding to the 28.0-40.1 min region on the linkage map.</title>
        <authorList>
            <person name="Aiba H."/>
            <person name="Baba T."/>
            <person name="Fujita K."/>
            <person name="Hayashi K."/>
            <person name="Inada T."/>
            <person name="Isono K."/>
            <person name="Itoh T."/>
            <person name="Kasai H."/>
            <person name="Kashimoto K."/>
            <person name="Kimura S."/>
            <person name="Kitakawa M."/>
            <person name="Kitagawa M."/>
            <person name="Makino K."/>
            <person name="Miki T."/>
            <person name="Mizobuchi K."/>
            <person name="Mori H."/>
            <person name="Mori T."/>
            <person name="Motomura K."/>
            <person name="Nakade S."/>
            <person name="Nakamura Y."/>
            <person name="Nashimoto H."/>
            <person name="Nishio Y."/>
            <person name="Oshima T."/>
            <person name="Saito N."/>
            <person name="Sampei G."/>
            <person name="Seki Y."/>
            <person name="Sivasundaram S."/>
            <person name="Tagami H."/>
            <person name="Takeda J."/>
            <person name="Takemoto K."/>
            <person name="Takeuchi Y."/>
            <person name="Wada C."/>
            <person name="Yamamoto Y."/>
            <person name="Horiuchi T."/>
        </authorList>
    </citation>
    <scope>NUCLEOTIDE SEQUENCE [LARGE SCALE GENOMIC DNA]</scope>
    <source>
        <strain>K12 / W3110 / ATCC 27325 / DSM 5911</strain>
    </source>
</reference>
<reference key="3">
    <citation type="journal article" date="1997" name="Science">
        <title>The complete genome sequence of Escherichia coli K-12.</title>
        <authorList>
            <person name="Blattner F.R."/>
            <person name="Plunkett G. III"/>
            <person name="Bloch C.A."/>
            <person name="Perna N.T."/>
            <person name="Burland V."/>
            <person name="Riley M."/>
            <person name="Collado-Vides J."/>
            <person name="Glasner J.D."/>
            <person name="Rode C.K."/>
            <person name="Mayhew G.F."/>
            <person name="Gregor J."/>
            <person name="Davis N.W."/>
            <person name="Kirkpatrick H.A."/>
            <person name="Goeden M.A."/>
            <person name="Rose D.J."/>
            <person name="Mau B."/>
            <person name="Shao Y."/>
        </authorList>
    </citation>
    <scope>NUCLEOTIDE SEQUENCE [LARGE SCALE GENOMIC DNA]</scope>
    <source>
        <strain>K12 / MG1655 / ATCC 47076</strain>
    </source>
</reference>
<reference key="4">
    <citation type="journal article" date="2006" name="Mol. Syst. Biol.">
        <title>Highly accurate genome sequences of Escherichia coli K-12 strains MG1655 and W3110.</title>
        <authorList>
            <person name="Hayashi K."/>
            <person name="Morooka N."/>
            <person name="Yamamoto Y."/>
            <person name="Fujita K."/>
            <person name="Isono K."/>
            <person name="Choi S."/>
            <person name="Ohtsubo E."/>
            <person name="Baba T."/>
            <person name="Wanner B.L."/>
            <person name="Mori H."/>
            <person name="Horiuchi T."/>
        </authorList>
    </citation>
    <scope>NUCLEOTIDE SEQUENCE [LARGE SCALE GENOMIC DNA]</scope>
    <source>
        <strain>K12 / W3110 / ATCC 27325 / DSM 5911</strain>
    </source>
</reference>
<reference key="5">
    <citation type="journal article" date="2000" name="Mol. Microbiol.">
        <title>Identification of a major facilitator protein from Escherichia coli involved in efflux of metabolites of the cysteine pathway.</title>
        <authorList>
            <person name="Dassler T."/>
            <person name="Maier T."/>
            <person name="Winterhalter C."/>
            <person name="Boeck A."/>
        </authorList>
    </citation>
    <scope>IDENTIFICATION OF START CODON</scope>
    <scope>FUNCTION</scope>
    <source>
        <strain>K12 / MC4100 / ATCC 35695 / DSM 6574</strain>
    </source>
</reference>
<reference key="6">
    <citation type="unpublished observations" date="2001-01">
        <authorList>
            <person name="Dassler T."/>
        </authorList>
    </citation>
    <scope>FUNCTION</scope>
</reference>
<reference key="7">
    <citation type="journal article" date="2005" name="Science">
        <title>Global topology analysis of the Escherichia coli inner membrane proteome.</title>
        <authorList>
            <person name="Daley D.O."/>
            <person name="Rapp M."/>
            <person name="Granseth E."/>
            <person name="Melen K."/>
            <person name="Drew D."/>
            <person name="von Heijne G."/>
        </authorList>
    </citation>
    <scope>TOPOLOGY [LARGE SCALE ANALYSIS]</scope>
    <source>
        <strain>K12 / MG1655 / ATCC 47076</strain>
    </source>
</reference>
<keyword id="KW-0029">Amino-acid transport</keyword>
<keyword id="KW-0997">Cell inner membrane</keyword>
<keyword id="KW-1003">Cell membrane</keyword>
<keyword id="KW-0472">Membrane</keyword>
<keyword id="KW-1185">Reference proteome</keyword>
<keyword id="KW-0677">Repeat</keyword>
<keyword id="KW-0812">Transmembrane</keyword>
<keyword id="KW-1133">Transmembrane helix</keyword>
<keyword id="KW-0813">Transport</keyword>
<feature type="chain" id="PRO_0000108148" description="Probable amino-acid metabolite efflux pump">
    <location>
        <begin position="1"/>
        <end position="299"/>
    </location>
</feature>
<feature type="topological domain" description="Cytoplasmic" evidence="1">
    <location>
        <begin position="1"/>
        <end position="6"/>
    </location>
</feature>
<feature type="transmembrane region" description="Helical" evidence="1">
    <location>
        <begin position="7"/>
        <end position="27"/>
    </location>
</feature>
<feature type="topological domain" description="Periplasmic" evidence="1">
    <location>
        <begin position="28"/>
        <end position="31"/>
    </location>
</feature>
<feature type="transmembrane region" description="Helical" evidence="1">
    <location>
        <begin position="32"/>
        <end position="52"/>
    </location>
</feature>
<feature type="topological domain" description="Cytoplasmic" evidence="1">
    <location>
        <begin position="53"/>
        <end position="59"/>
    </location>
</feature>
<feature type="transmembrane region" description="Helical" evidence="1">
    <location>
        <begin position="60"/>
        <end position="80"/>
    </location>
</feature>
<feature type="topological domain" description="Periplasmic" evidence="1">
    <location>
        <begin position="81"/>
        <end position="87"/>
    </location>
</feature>
<feature type="transmembrane region" description="Helical" evidence="1">
    <location>
        <begin position="88"/>
        <end position="108"/>
    </location>
</feature>
<feature type="topological domain" description="Cytoplasmic" evidence="1">
    <location>
        <begin position="109"/>
        <end position="116"/>
    </location>
</feature>
<feature type="transmembrane region" description="Helical" evidence="1">
    <location>
        <begin position="117"/>
        <end position="137"/>
    </location>
</feature>
<feature type="topological domain" description="Periplasmic" evidence="1">
    <location>
        <begin position="138"/>
        <end position="140"/>
    </location>
</feature>
<feature type="transmembrane region" description="Helical" evidence="1">
    <location>
        <begin position="141"/>
        <end position="161"/>
    </location>
</feature>
<feature type="topological domain" description="Cytoplasmic" evidence="1">
    <location>
        <begin position="162"/>
        <end position="175"/>
    </location>
</feature>
<feature type="transmembrane region" description="Helical" evidence="1">
    <location>
        <begin position="176"/>
        <end position="196"/>
    </location>
</feature>
<feature type="topological domain" description="Periplasmic" evidence="1">
    <location>
        <begin position="197"/>
        <end position="216"/>
    </location>
</feature>
<feature type="transmembrane region" description="Helical" evidence="1">
    <location>
        <begin position="217"/>
        <end position="237"/>
    </location>
</feature>
<feature type="topological domain" description="Cytoplasmic" evidence="1">
    <location>
        <begin position="238"/>
        <end position="243"/>
    </location>
</feature>
<feature type="transmembrane region" description="Helical" evidence="1">
    <location>
        <begin position="244"/>
        <end position="264"/>
    </location>
</feature>
<feature type="topological domain" description="Periplasmic" evidence="1">
    <location>
        <begin position="265"/>
        <end position="268"/>
    </location>
</feature>
<feature type="transmembrane region" description="Helical" evidence="1">
    <location>
        <begin position="269"/>
        <end position="289"/>
    </location>
</feature>
<feature type="topological domain" description="Cytoplasmic" evidence="1">
    <location>
        <begin position="290"/>
        <end position="299"/>
    </location>
</feature>
<feature type="domain" description="EamA 1">
    <location>
        <begin position="14"/>
        <end position="132"/>
    </location>
</feature>
<feature type="domain" description="EamA 2">
    <location>
        <begin position="153"/>
        <end position="287"/>
    </location>
</feature>
<name>EAMA_ECOLI</name>
<evidence type="ECO:0000255" key="1"/>
<evidence type="ECO:0000269" key="2">
    <source>
    </source>
</evidence>
<evidence type="ECO:0000269" key="3">
    <source ref="6"/>
</evidence>
<evidence type="ECO:0000305" key="4"/>
<comment type="function">
    <text evidence="2 3">May be an export pump for cysteine and other metabolites of the cysteine pathway (such as N-acetyl-L-serine (NAS) and O-acetyl-L-serine (OAS)), and for other amino acids and their metabolites.</text>
</comment>
<comment type="subcellular location">
    <subcellularLocation>
        <location>Cell inner membrane</location>
        <topology>Multi-pass membrane protein</topology>
    </subcellularLocation>
</comment>
<comment type="similarity">
    <text evidence="4">Belongs to the EamA transporter family.</text>
</comment>
<proteinExistence type="evidence at protein level"/>
<dbReference type="EMBL" id="M96235">
    <property type="status" value="NOT_ANNOTATED_CDS"/>
    <property type="molecule type" value="Genomic_DNA"/>
</dbReference>
<dbReference type="EMBL" id="U00096">
    <property type="protein sequence ID" value="AAC74606.2"/>
    <property type="molecule type" value="Genomic_DNA"/>
</dbReference>
<dbReference type="EMBL" id="AP009048">
    <property type="protein sequence ID" value="BAA15223.2"/>
    <property type="molecule type" value="Genomic_DNA"/>
</dbReference>
<dbReference type="PIR" id="H64907">
    <property type="entry name" value="H64907"/>
</dbReference>
<dbReference type="RefSeq" id="NP_416050.4">
    <property type="nucleotide sequence ID" value="NC_000913.3"/>
</dbReference>
<dbReference type="RefSeq" id="WP_000087187.1">
    <property type="nucleotide sequence ID" value="NZ_LN832404.1"/>
</dbReference>
<dbReference type="SMR" id="P31125"/>
<dbReference type="BioGRID" id="4259112">
    <property type="interactions" value="4"/>
</dbReference>
<dbReference type="FunCoup" id="P31125">
    <property type="interactions" value="140"/>
</dbReference>
<dbReference type="STRING" id="511145.b1533"/>
<dbReference type="TCDB" id="2.A.7.3.2">
    <property type="family name" value="the drug/metabolite transporter (dmt) superfamily"/>
</dbReference>
<dbReference type="PaxDb" id="511145-b1533"/>
<dbReference type="EnsemblBacteria" id="AAC74606">
    <property type="protein sequence ID" value="AAC74606"/>
    <property type="gene ID" value="b1533"/>
</dbReference>
<dbReference type="GeneID" id="946081"/>
<dbReference type="KEGG" id="ecj:JW5250"/>
<dbReference type="KEGG" id="eco:b1533"/>
<dbReference type="KEGG" id="ecoc:C3026_08855"/>
<dbReference type="PATRIC" id="fig|1411691.4.peg.733"/>
<dbReference type="EchoBASE" id="EB1594"/>
<dbReference type="eggNOG" id="COG0697">
    <property type="taxonomic scope" value="Bacteria"/>
</dbReference>
<dbReference type="HOGENOM" id="CLU_033863_20_1_6"/>
<dbReference type="InParanoid" id="P31125"/>
<dbReference type="OMA" id="NTLTWPV"/>
<dbReference type="OrthoDB" id="7158585at2"/>
<dbReference type="PhylomeDB" id="P31125"/>
<dbReference type="BioCyc" id="EcoCyc:EG11639-MONOMER"/>
<dbReference type="BioCyc" id="MetaCyc:EG11639-MONOMER"/>
<dbReference type="PRO" id="PR:P31125"/>
<dbReference type="Proteomes" id="UP000000625">
    <property type="component" value="Chromosome"/>
</dbReference>
<dbReference type="GO" id="GO:0005886">
    <property type="term" value="C:plasma membrane"/>
    <property type="evidence" value="ECO:0000314"/>
    <property type="project" value="EcoCyc"/>
</dbReference>
<dbReference type="GO" id="GO:0015562">
    <property type="term" value="F:efflux transmembrane transporter activity"/>
    <property type="evidence" value="ECO:0000315"/>
    <property type="project" value="EcoCyc"/>
</dbReference>
<dbReference type="GO" id="GO:0070301">
    <property type="term" value="P:cellular response to hydrogen peroxide"/>
    <property type="evidence" value="ECO:0000270"/>
    <property type="project" value="EcoCyc"/>
</dbReference>
<dbReference type="GO" id="GO:0033228">
    <property type="term" value="P:cysteine export across plasma membrane"/>
    <property type="evidence" value="ECO:0000315"/>
    <property type="project" value="EcoCyc"/>
</dbReference>
<dbReference type="InterPro" id="IPR050638">
    <property type="entry name" value="AA-Vitamin_Transporters"/>
</dbReference>
<dbReference type="InterPro" id="IPR000620">
    <property type="entry name" value="EamA_dom"/>
</dbReference>
<dbReference type="NCBIfam" id="NF008523">
    <property type="entry name" value="PRK11453.1"/>
    <property type="match status" value="1"/>
</dbReference>
<dbReference type="PANTHER" id="PTHR32322:SF9">
    <property type="entry name" value="AMINO-ACID METABOLITE EFFLUX PUMP-RELATED"/>
    <property type="match status" value="1"/>
</dbReference>
<dbReference type="PANTHER" id="PTHR32322">
    <property type="entry name" value="INNER MEMBRANE TRANSPORTER"/>
    <property type="match status" value="1"/>
</dbReference>
<dbReference type="Pfam" id="PF00892">
    <property type="entry name" value="EamA"/>
    <property type="match status" value="2"/>
</dbReference>
<dbReference type="SUPFAM" id="SSF103481">
    <property type="entry name" value="Multidrug resistance efflux transporter EmrE"/>
    <property type="match status" value="2"/>
</dbReference>
<protein>
    <recommendedName>
        <fullName>Probable amino-acid metabolite efflux pump</fullName>
    </recommendedName>
</protein>